<gene>
    <name type="ordered locus">TP_0777</name>
</gene>
<name>Y777_TREPA</name>
<accession>O83756</accession>
<dbReference type="EMBL" id="AE000520">
    <property type="protein sequence ID" value="AAC65750.1"/>
    <property type="molecule type" value="Genomic_DNA"/>
</dbReference>
<dbReference type="PIR" id="B71282">
    <property type="entry name" value="B71282"/>
</dbReference>
<dbReference type="RefSeq" id="WP_010882222.1">
    <property type="nucleotide sequence ID" value="NC_021490.2"/>
</dbReference>
<dbReference type="IntAct" id="O83756">
    <property type="interactions" value="2"/>
</dbReference>
<dbReference type="STRING" id="243276.TP_0777"/>
<dbReference type="EnsemblBacteria" id="AAC65750">
    <property type="protein sequence ID" value="AAC65750"/>
    <property type="gene ID" value="TP_0777"/>
</dbReference>
<dbReference type="KEGG" id="tpa:TP_0777"/>
<dbReference type="KEGG" id="tpw:TPANIC_0777"/>
<dbReference type="eggNOG" id="ENOG5031CR7">
    <property type="taxonomic scope" value="Bacteria"/>
</dbReference>
<dbReference type="HOGENOM" id="CLU_2686730_0_0_12"/>
<dbReference type="OrthoDB" id="361479at2"/>
<dbReference type="Proteomes" id="UP000000811">
    <property type="component" value="Chromosome"/>
</dbReference>
<proteinExistence type="predicted"/>
<sequence>MKTLQCDICRKEVDNSLPERLYWTFREYDVCEDCKESIEDKLRPIIRTHQPYSQGWYENQFMGMVQRGVSNRRP</sequence>
<feature type="chain" id="PRO_0000202321" description="Uncharacterized protein TP_0777">
    <location>
        <begin position="1"/>
        <end position="74"/>
    </location>
</feature>
<protein>
    <recommendedName>
        <fullName>Uncharacterized protein TP_0777</fullName>
    </recommendedName>
</protein>
<reference key="1">
    <citation type="journal article" date="1998" name="Science">
        <title>Complete genome sequence of Treponema pallidum, the syphilis spirochete.</title>
        <authorList>
            <person name="Fraser C.M."/>
            <person name="Norris S.J."/>
            <person name="Weinstock G.M."/>
            <person name="White O."/>
            <person name="Sutton G.G."/>
            <person name="Dodson R.J."/>
            <person name="Gwinn M.L."/>
            <person name="Hickey E.K."/>
            <person name="Clayton R.A."/>
            <person name="Ketchum K.A."/>
            <person name="Sodergren E."/>
            <person name="Hardham J.M."/>
            <person name="McLeod M.P."/>
            <person name="Salzberg S.L."/>
            <person name="Peterson J.D."/>
            <person name="Khalak H.G."/>
            <person name="Richardson D.L."/>
            <person name="Howell J.K."/>
            <person name="Chidambaram M."/>
            <person name="Utterback T.R."/>
            <person name="McDonald L.A."/>
            <person name="Artiach P."/>
            <person name="Bowman C."/>
            <person name="Cotton M.D."/>
            <person name="Fujii C."/>
            <person name="Garland S.A."/>
            <person name="Hatch B."/>
            <person name="Horst K."/>
            <person name="Roberts K.M."/>
            <person name="Sandusky M."/>
            <person name="Weidman J.F."/>
            <person name="Smith H.O."/>
            <person name="Venter J.C."/>
        </authorList>
    </citation>
    <scope>NUCLEOTIDE SEQUENCE [LARGE SCALE GENOMIC DNA]</scope>
    <source>
        <strain>Nichols</strain>
    </source>
</reference>
<organism>
    <name type="scientific">Treponema pallidum (strain Nichols)</name>
    <dbReference type="NCBI Taxonomy" id="243276"/>
    <lineage>
        <taxon>Bacteria</taxon>
        <taxon>Pseudomonadati</taxon>
        <taxon>Spirochaetota</taxon>
        <taxon>Spirochaetia</taxon>
        <taxon>Spirochaetales</taxon>
        <taxon>Treponemataceae</taxon>
        <taxon>Treponema</taxon>
    </lineage>
</organism>
<keyword id="KW-1185">Reference proteome</keyword>